<keyword id="KW-0025">Alternative splicing</keyword>
<keyword id="KW-0963">Cytoplasm</keyword>
<keyword id="KW-0217">Developmental protein</keyword>
<keyword id="KW-0221">Differentiation</keyword>
<keyword id="KW-0489">Methyltransferase</keyword>
<keyword id="KW-0896">Oogenesis</keyword>
<keyword id="KW-1185">Reference proteome</keyword>
<keyword id="KW-0949">S-adenosyl-L-methionine</keyword>
<keyword id="KW-0808">Transferase</keyword>
<proteinExistence type="evidence at protein level"/>
<organism evidence="13">
    <name type="scientific">Drosophila melanogaster</name>
    <name type="common">Fruit fly</name>
    <dbReference type="NCBI Taxonomy" id="7227"/>
    <lineage>
        <taxon>Eukaryota</taxon>
        <taxon>Metazoa</taxon>
        <taxon>Ecdysozoa</taxon>
        <taxon>Arthropoda</taxon>
        <taxon>Hexapoda</taxon>
        <taxon>Insecta</taxon>
        <taxon>Pterygota</taxon>
        <taxon>Neoptera</taxon>
        <taxon>Endopterygota</taxon>
        <taxon>Diptera</taxon>
        <taxon>Brachycera</taxon>
        <taxon>Muscomorpha</taxon>
        <taxon>Ephydroidea</taxon>
        <taxon>Drosophilidae</taxon>
        <taxon>Drosophila</taxon>
        <taxon>Sophophora</taxon>
    </lineage>
</organism>
<name>ANM5_DROME</name>
<reference key="1">
    <citation type="journal article" date="1999" name="J. Biol. Chem.">
        <title>The human homologue of the yeast proteins Skb1 and Hsl7p interacts with Jak kinases and contains protein methyltransferase activity.</title>
        <authorList>
            <person name="Pollack B.P."/>
            <person name="Kotenko S.V."/>
            <person name="He W."/>
            <person name="Izotova L.S."/>
            <person name="Barnoski B.L."/>
            <person name="Pestka S."/>
        </authorList>
    </citation>
    <scope>NUCLEOTIDE SEQUENCE [MRNA] (ISOFORM 1)</scope>
</reference>
<reference key="2">
    <citation type="submission" date="1997-11" db="EMBL/GenBank/DDBJ databases">
        <authorList>
            <person name="Anne J."/>
            <person name="Martin J.R."/>
            <person name="Merdes G."/>
            <person name="Raibaud A."/>
            <person name="Sather S."/>
            <person name="Ollo R."/>
            <person name="Mechler B.M."/>
        </authorList>
    </citation>
    <scope>NUCLEOTIDE SEQUENCE [GENOMIC DNA]</scope>
</reference>
<reference key="3">
    <citation type="journal article" date="2000" name="Science">
        <title>The genome sequence of Drosophila melanogaster.</title>
        <authorList>
            <person name="Adams M.D."/>
            <person name="Celniker S.E."/>
            <person name="Holt R.A."/>
            <person name="Evans C.A."/>
            <person name="Gocayne J.D."/>
            <person name="Amanatides P.G."/>
            <person name="Scherer S.E."/>
            <person name="Li P.W."/>
            <person name="Hoskins R.A."/>
            <person name="Galle R.F."/>
            <person name="George R.A."/>
            <person name="Lewis S.E."/>
            <person name="Richards S."/>
            <person name="Ashburner M."/>
            <person name="Henderson S.N."/>
            <person name="Sutton G.G."/>
            <person name="Wortman J.R."/>
            <person name="Yandell M.D."/>
            <person name="Zhang Q."/>
            <person name="Chen L.X."/>
            <person name="Brandon R.C."/>
            <person name="Rogers Y.-H.C."/>
            <person name="Blazej R.G."/>
            <person name="Champe M."/>
            <person name="Pfeiffer B.D."/>
            <person name="Wan K.H."/>
            <person name="Doyle C."/>
            <person name="Baxter E.G."/>
            <person name="Helt G."/>
            <person name="Nelson C.R."/>
            <person name="Miklos G.L.G."/>
            <person name="Abril J.F."/>
            <person name="Agbayani A."/>
            <person name="An H.-J."/>
            <person name="Andrews-Pfannkoch C."/>
            <person name="Baldwin D."/>
            <person name="Ballew R.M."/>
            <person name="Basu A."/>
            <person name="Baxendale J."/>
            <person name="Bayraktaroglu L."/>
            <person name="Beasley E.M."/>
            <person name="Beeson K.Y."/>
            <person name="Benos P.V."/>
            <person name="Berman B.P."/>
            <person name="Bhandari D."/>
            <person name="Bolshakov S."/>
            <person name="Borkova D."/>
            <person name="Botchan M.R."/>
            <person name="Bouck J."/>
            <person name="Brokstein P."/>
            <person name="Brottier P."/>
            <person name="Burtis K.C."/>
            <person name="Busam D.A."/>
            <person name="Butler H."/>
            <person name="Cadieu E."/>
            <person name="Center A."/>
            <person name="Chandra I."/>
            <person name="Cherry J.M."/>
            <person name="Cawley S."/>
            <person name="Dahlke C."/>
            <person name="Davenport L.B."/>
            <person name="Davies P."/>
            <person name="de Pablos B."/>
            <person name="Delcher A."/>
            <person name="Deng Z."/>
            <person name="Mays A.D."/>
            <person name="Dew I."/>
            <person name="Dietz S.M."/>
            <person name="Dodson K."/>
            <person name="Doup L.E."/>
            <person name="Downes M."/>
            <person name="Dugan-Rocha S."/>
            <person name="Dunkov B.C."/>
            <person name="Dunn P."/>
            <person name="Durbin K.J."/>
            <person name="Evangelista C.C."/>
            <person name="Ferraz C."/>
            <person name="Ferriera S."/>
            <person name="Fleischmann W."/>
            <person name="Fosler C."/>
            <person name="Gabrielian A.E."/>
            <person name="Garg N.S."/>
            <person name="Gelbart W.M."/>
            <person name="Glasser K."/>
            <person name="Glodek A."/>
            <person name="Gong F."/>
            <person name="Gorrell J.H."/>
            <person name="Gu Z."/>
            <person name="Guan P."/>
            <person name="Harris M."/>
            <person name="Harris N.L."/>
            <person name="Harvey D.A."/>
            <person name="Heiman T.J."/>
            <person name="Hernandez J.R."/>
            <person name="Houck J."/>
            <person name="Hostin D."/>
            <person name="Houston K.A."/>
            <person name="Howland T.J."/>
            <person name="Wei M.-H."/>
            <person name="Ibegwam C."/>
            <person name="Jalali M."/>
            <person name="Kalush F."/>
            <person name="Karpen G.H."/>
            <person name="Ke Z."/>
            <person name="Kennison J.A."/>
            <person name="Ketchum K.A."/>
            <person name="Kimmel B.E."/>
            <person name="Kodira C.D."/>
            <person name="Kraft C.L."/>
            <person name="Kravitz S."/>
            <person name="Kulp D."/>
            <person name="Lai Z."/>
            <person name="Lasko P."/>
            <person name="Lei Y."/>
            <person name="Levitsky A.A."/>
            <person name="Li J.H."/>
            <person name="Li Z."/>
            <person name="Liang Y."/>
            <person name="Lin X."/>
            <person name="Liu X."/>
            <person name="Mattei B."/>
            <person name="McIntosh T.C."/>
            <person name="McLeod M.P."/>
            <person name="McPherson D."/>
            <person name="Merkulov G."/>
            <person name="Milshina N.V."/>
            <person name="Mobarry C."/>
            <person name="Morris J."/>
            <person name="Moshrefi A."/>
            <person name="Mount S.M."/>
            <person name="Moy M."/>
            <person name="Murphy B."/>
            <person name="Murphy L."/>
            <person name="Muzny D.M."/>
            <person name="Nelson D.L."/>
            <person name="Nelson D.R."/>
            <person name="Nelson K.A."/>
            <person name="Nixon K."/>
            <person name="Nusskern D.R."/>
            <person name="Pacleb J.M."/>
            <person name="Palazzolo M."/>
            <person name="Pittman G.S."/>
            <person name="Pan S."/>
            <person name="Pollard J."/>
            <person name="Puri V."/>
            <person name="Reese M.G."/>
            <person name="Reinert K."/>
            <person name="Remington K."/>
            <person name="Saunders R.D.C."/>
            <person name="Scheeler F."/>
            <person name="Shen H."/>
            <person name="Shue B.C."/>
            <person name="Siden-Kiamos I."/>
            <person name="Simpson M."/>
            <person name="Skupski M.P."/>
            <person name="Smith T.J."/>
            <person name="Spier E."/>
            <person name="Spradling A.C."/>
            <person name="Stapleton M."/>
            <person name="Strong R."/>
            <person name="Sun E."/>
            <person name="Svirskas R."/>
            <person name="Tector C."/>
            <person name="Turner R."/>
            <person name="Venter E."/>
            <person name="Wang A.H."/>
            <person name="Wang X."/>
            <person name="Wang Z.-Y."/>
            <person name="Wassarman D.A."/>
            <person name="Weinstock G.M."/>
            <person name="Weissenbach J."/>
            <person name="Williams S.M."/>
            <person name="Woodage T."/>
            <person name="Worley K.C."/>
            <person name="Wu D."/>
            <person name="Yang S."/>
            <person name="Yao Q.A."/>
            <person name="Ye J."/>
            <person name="Yeh R.-F."/>
            <person name="Zaveri J.S."/>
            <person name="Zhan M."/>
            <person name="Zhang G."/>
            <person name="Zhao Q."/>
            <person name="Zheng L."/>
            <person name="Zheng X.H."/>
            <person name="Zhong F.N."/>
            <person name="Zhong W."/>
            <person name="Zhou X."/>
            <person name="Zhu S.C."/>
            <person name="Zhu X."/>
            <person name="Smith H.O."/>
            <person name="Gibbs R.A."/>
            <person name="Myers E.W."/>
            <person name="Rubin G.M."/>
            <person name="Venter J.C."/>
        </authorList>
    </citation>
    <scope>NUCLEOTIDE SEQUENCE [LARGE SCALE GENOMIC DNA]</scope>
    <source>
        <strain>Berkeley</strain>
    </source>
</reference>
<reference key="4">
    <citation type="journal article" date="2002" name="Genome Biol.">
        <title>Annotation of the Drosophila melanogaster euchromatic genome: a systematic review.</title>
        <authorList>
            <person name="Misra S."/>
            <person name="Crosby M.A."/>
            <person name="Mungall C.J."/>
            <person name="Matthews B.B."/>
            <person name="Campbell K.S."/>
            <person name="Hradecky P."/>
            <person name="Huang Y."/>
            <person name="Kaminker J.S."/>
            <person name="Millburn G.H."/>
            <person name="Prochnik S.E."/>
            <person name="Smith C.D."/>
            <person name="Tupy J.L."/>
            <person name="Whitfield E.J."/>
            <person name="Bayraktaroglu L."/>
            <person name="Berman B.P."/>
            <person name="Bettencourt B.R."/>
            <person name="Celniker S.E."/>
            <person name="de Grey A.D.N.J."/>
            <person name="Drysdale R.A."/>
            <person name="Harris N.L."/>
            <person name="Richter J."/>
            <person name="Russo S."/>
            <person name="Schroeder A.J."/>
            <person name="Shu S.Q."/>
            <person name="Stapleton M."/>
            <person name="Yamada C."/>
            <person name="Ashburner M."/>
            <person name="Gelbart W.M."/>
            <person name="Rubin G.M."/>
            <person name="Lewis S.E."/>
        </authorList>
    </citation>
    <scope>GENOME REANNOTATION</scope>
    <scope>ALTERNATIVE SPLICING</scope>
    <source>
        <strain>Berkeley</strain>
    </source>
</reference>
<reference key="5">
    <citation type="journal article" date="2002" name="Genome Biol.">
        <title>A Drosophila full-length cDNA resource.</title>
        <authorList>
            <person name="Stapleton M."/>
            <person name="Carlson J.W."/>
            <person name="Brokstein P."/>
            <person name="Yu C."/>
            <person name="Champe M."/>
            <person name="George R.A."/>
            <person name="Guarin H."/>
            <person name="Kronmiller B."/>
            <person name="Pacleb J.M."/>
            <person name="Park S."/>
            <person name="Wan K.H."/>
            <person name="Rubin G.M."/>
            <person name="Celniker S.E."/>
        </authorList>
    </citation>
    <scope>NUCLEOTIDE SEQUENCE [LARGE SCALE MRNA] (ISOFORM 1)</scope>
    <source>
        <strain>Berkeley</strain>
        <tissue>Embryo</tissue>
    </source>
</reference>
<reference key="6">
    <citation type="book" date="2002" name="43th Annual Drosophila Research Conference">
        <title>Capsuleen, a 'grandchildless' gene, encodes a homologue of the human HsSkb1/PRMT5 methyltransferase.</title>
        <authorList>
            <person name="Anne J."/>
            <person name="Mechler B.M."/>
        </authorList>
    </citation>
    <scope>FUNCTION</scope>
    <scope>DEVELOPMENTAL STAGE</scope>
</reference>
<reference key="7">
    <citation type="journal article" date="2004" name="Biochem. J.">
        <title>Characterization of the Drosophila protein arginine methyltransferases DART1 and DART4.</title>
        <authorList>
            <person name="Boulanger M.-C."/>
            <person name="Miranda T.B."/>
            <person name="Clarke S."/>
            <person name="Di Fruscio M."/>
            <person name="Suter B."/>
            <person name="Lasko P."/>
            <person name="Richard S."/>
        </authorList>
    </citation>
    <scope>TISSUE SPECIFICITY</scope>
</reference>
<reference key="8">
    <citation type="journal article" date="2005" name="Development">
        <title>Valois, a component of the nuage and pole plasm, is involved in assembly of these structures, and binds to Tudor and the methyltransferase Capsuleen.</title>
        <authorList>
            <person name="Anne J."/>
            <person name="Mechler B.M."/>
        </authorList>
    </citation>
    <scope>INTERACTION WITH VLS</scope>
</reference>
<reference key="9">
    <citation type="journal article" date="2008" name="RNA">
        <title>Sm protein methylation is dispensable for snRNP assembly in Drosophila melanogaster.</title>
        <authorList>
            <person name="Gonsalvez G.B."/>
            <person name="Praveen K."/>
            <person name="Hicks A.J."/>
            <person name="Tian L."/>
            <person name="Matera A.G."/>
        </authorList>
    </citation>
    <scope>FUNCTION</scope>
    <scope>DISRUPTION PHENOTYPE</scope>
</reference>
<reference key="10">
    <citation type="journal article" date="2009" name="EMBO J.">
        <title>Functional involvement of Tudor and dPRMT5 in the piRNA processing pathway in Drosophila germlines.</title>
        <authorList>
            <person name="Nishida K.M."/>
            <person name="Okada T.N."/>
            <person name="Kawamura T."/>
            <person name="Mituyama T."/>
            <person name="Kawamura Y."/>
            <person name="Inagaki S."/>
            <person name="Huang H."/>
            <person name="Chen D."/>
            <person name="Kodama T."/>
            <person name="Siomi H."/>
            <person name="Siomi M.C."/>
        </authorList>
    </citation>
    <scope>FUNCTION</scope>
</reference>
<reference key="11">
    <citation type="journal article" date="2009" name="Nat. Cell Biol.">
        <title>Arginine methylation of Piwi proteins catalysed by dPRMT5 is required for Ago3 and Aub stability.</title>
        <authorList>
            <person name="Kirino Y."/>
            <person name="Kim N."/>
            <person name="de Planell-Saguer M."/>
            <person name="Khandros E."/>
            <person name="Chiorean S."/>
            <person name="Klein P.S."/>
            <person name="Rigoutsos I."/>
            <person name="Jongens T.A."/>
            <person name="Mourelatos Z."/>
        </authorList>
    </citation>
    <scope>FUNCTION</scope>
</reference>
<reference key="12">
    <citation type="journal article" date="2010" name="RNA">
        <title>Arginine methylation of Aubergine mediates Tudor binding and germ plasm localization.</title>
        <authorList>
            <person name="Kirino Y."/>
            <person name="Vourekas A."/>
            <person name="Sayed N."/>
            <person name="de Lima Alves F."/>
            <person name="Thomson T."/>
            <person name="Lasko P."/>
            <person name="Rappsilber J."/>
            <person name="Jongens T.A."/>
            <person name="Mourelatos Z."/>
        </authorList>
    </citation>
    <scope>FUNCTION</scope>
</reference>
<sequence>MNYYVCLHQEGVNSIPKLIEKAFANNYNVVSTSINANMLPFEPHESDPTYPATILSGSDWNSKVIFTMSDVNVDSPNDKLREHAKEVFMRDVAWAEHLQNVGNLMVRLRGPENENLASIVLAKTKDDFPSGNWFIQVPITNPELATFEHRKDATAEEVAEAESNDPWNWWNNLRMVTKHSTKVKVVIELNDADRPSKETVRRWLGEPIEAIIIPSSLFVRNRSNYCVLKKEWQLIVGHFISVRANIIISTNPNDKALCQYADYVNKLINDNCDKHMLNSYENMLEIPLQPLCDNLDTYTYEVFETDPVKYKLYQDAVQAALLDRVSAAEAKTKLTVVMLLGGGRGPLARAVFNAAELTKRKVRLYIIEKNPNAIRTLSNMVKTLWADKDVHIFSKDMRDFSPPELADIMVSELLGSFGDNELSPECLDGALKLLKPDGISIPYKSTSYINPLMSAVLHQNVCQLLPTYPAFDYGYVSLLKNIYHIDEPQALFEFVHPNRAENIDNTRCKTVSFKVNKDCVLHGIGGYFDTHLYKDICLSINPLTHTPGMFSWFPMFFATRPRTLREGQTISIQFWRCVDATKVWYEWQVVNSPDDWEHHNTRGTGYNMRL</sequence>
<comment type="function">
    <text evidence="1 6 7 8 9 10">Arginine methyltransferase that can both catalyze the formation of omega-N monomethylarginine (MMA) and symmetrical dimethylarginine (sDMA) (By similarity). Specifically mediates the symmetrical dimethylation of arginine residues in the small nuclear ribonucleoproteins SmD1 and SmD3. Required for arginine symmetrical dimethylation of piwi family proteins, piwi, aub and AGO3, during germline development (PubMed:19377467, PubMed:19959991). Required during oogenesis for pole cell formation in the pathway controlled by oskar (osk) and for abdominal segments during early embryogenesis. Involved in nanos (nos) and germ cell mRNAs localization.</text>
</comment>
<comment type="subunit">
    <text evidence="5">Interacts with vls.</text>
</comment>
<comment type="subcellular location">
    <subcellularLocation>
        <location evidence="11">Cytoplasm</location>
    </subcellularLocation>
</comment>
<comment type="alternative products">
    <event type="alternative splicing"/>
    <isoform>
        <id>Q9U6Y9-1</id>
        <name>1</name>
        <name>A</name>
        <sequence type="displayed"/>
    </isoform>
    <isoform>
        <id>Q9U6Y9-2</id>
        <name>2</name>
        <name>B</name>
        <sequence type="described" ref="VSP_014035"/>
    </isoform>
</comment>
<comment type="tissue specificity">
    <text evidence="4">Expressed only in ovaries.</text>
</comment>
<comment type="developmental stage">
    <text evidence="10">Expressed both maternally and zygotically. Expressed from stage 3 egg chambers onward, becoming restricted to the cortex of the oocytes at stage 10. Evenly distributed in preblastoderm embryos.</text>
</comment>
<comment type="disruption phenotype">
    <text evidence="6">Flies are viable and do not display neuromuscular dysfunctions. Strong synthetic lethal phenotype in the presence of a hypomorphic Smn mutation.</text>
</comment>
<comment type="similarity">
    <text evidence="3">Belongs to the class I-like SAM-binding methyltransferase superfamily. Protein arginine N-methyltransferase family.</text>
</comment>
<accession>Q9U6Y9</accession>
<accession>O46117</accession>
<accession>Q8MKK9</accession>
<accession>Q9V7L8</accession>
<feature type="chain" id="PRO_0000212340" description="Protein arginine N-methyltransferase 5">
    <location>
        <begin position="1"/>
        <end position="610"/>
    </location>
</feature>
<feature type="domain" description="SAM-dependent MTase PRMT-type" evidence="3">
    <location>
        <begin position="284"/>
        <end position="587"/>
    </location>
</feature>
<feature type="region of interest" description="Interaction with vls">
    <location>
        <begin position="470"/>
        <end position="610"/>
    </location>
</feature>
<feature type="active site" description="Proton donor/acceptor" evidence="1">
    <location>
        <position position="412"/>
    </location>
</feature>
<feature type="active site" description="Proton donor/acceptor" evidence="1">
    <location>
        <position position="421"/>
    </location>
</feature>
<feature type="binding site" evidence="1">
    <location>
        <position position="300"/>
    </location>
    <ligand>
        <name>S-adenosyl-L-methionine</name>
        <dbReference type="ChEBI" id="CHEBI:59789"/>
    </ligand>
</feature>
<feature type="binding site" evidence="2">
    <location>
        <position position="303"/>
    </location>
    <ligand>
        <name>a protein</name>
        <dbReference type="ChEBI" id="CHEBI:16541"/>
        <note>substrate</note>
    </ligand>
    <ligandPart>
        <name>L-arginine residue</name>
        <dbReference type="ChEBI" id="CHEBI:29965"/>
    </ligandPart>
</feature>
<feature type="binding site" evidence="1">
    <location>
        <begin position="309"/>
        <end position="310"/>
    </location>
    <ligand>
        <name>S-adenosyl-L-methionine</name>
        <dbReference type="ChEBI" id="CHEBI:59789"/>
    </ligand>
</feature>
<feature type="binding site" evidence="1">
    <location>
        <position position="368"/>
    </location>
    <ligand>
        <name>S-adenosyl-L-methionine</name>
        <dbReference type="ChEBI" id="CHEBI:59789"/>
    </ligand>
</feature>
<feature type="binding site" evidence="1">
    <location>
        <begin position="396"/>
        <end position="397"/>
    </location>
    <ligand>
        <name>S-adenosyl-L-methionine</name>
        <dbReference type="ChEBI" id="CHEBI:59789"/>
    </ligand>
</feature>
<feature type="binding site" evidence="2">
    <location>
        <position position="412"/>
    </location>
    <ligand>
        <name>a protein</name>
        <dbReference type="ChEBI" id="CHEBI:16541"/>
        <note>substrate</note>
    </ligand>
    <ligandPart>
        <name>L-arginine residue</name>
        <dbReference type="ChEBI" id="CHEBI:29965"/>
    </ligandPart>
</feature>
<feature type="binding site" evidence="2">
    <location>
        <position position="421"/>
    </location>
    <ligand>
        <name>a protein</name>
        <dbReference type="ChEBI" id="CHEBI:16541"/>
        <note>substrate</note>
    </ligand>
    <ligandPart>
        <name>L-arginine residue</name>
        <dbReference type="ChEBI" id="CHEBI:29965"/>
    </ligandPart>
</feature>
<feature type="splice variant" id="VSP_014035" description="In isoform 2." evidence="11">
    <location>
        <begin position="126"/>
        <end position="130"/>
    </location>
</feature>
<feature type="sequence conflict" description="In Ref. 2; CAA05712." evidence="11" ref="2">
    <original>L</original>
    <variation>M</variation>
    <location>
        <position position="39"/>
    </location>
</feature>
<feature type="sequence conflict" description="In Ref. 2; CAA05712." evidence="11" ref="2">
    <original>D</original>
    <variation>A</variation>
    <location>
        <position position="78"/>
    </location>
</feature>
<feature type="sequence conflict" description="In Ref. 2; CAA05712." evidence="11" ref="2">
    <original>AVFNAA</original>
    <variation>LFSMTS</variation>
    <location>
        <begin position="350"/>
        <end position="355"/>
    </location>
</feature>
<feature type="sequence conflict" description="In Ref. 1; AAF04504." evidence="11" ref="1">
    <original>S</original>
    <variation>F</variation>
    <location>
        <position position="447"/>
    </location>
</feature>
<feature type="sequence conflict" description="In Ref. 2; CAA05712." evidence="11" ref="2">
    <original>EP</original>
    <variation>K</variation>
    <location>
        <begin position="487"/>
        <end position="488"/>
    </location>
</feature>
<feature type="sequence conflict" description="In Ref. 1; AAF04504." evidence="11" ref="1">
    <original>F</original>
    <variation>V</variation>
    <location>
        <position position="494"/>
    </location>
</feature>
<feature type="sequence conflict" description="In Ref. 1; AAF04504." evidence="11" ref="1">
    <original>EN</original>
    <variation>GD</variation>
    <location>
        <begin position="501"/>
        <end position="502"/>
    </location>
</feature>
<feature type="sequence conflict" description="In Ref. 2; CAA05712." evidence="11" ref="2">
    <original>R</original>
    <variation>P</variation>
    <location>
        <position position="507"/>
    </location>
</feature>
<gene>
    <name evidence="12" type="primary">csul</name>
    <name evidence="12" type="synonym">DART5</name>
    <name evidence="12" type="ORF">CG3730</name>
</gene>
<evidence type="ECO:0000250" key="1"/>
<evidence type="ECO:0000250" key="2">
    <source>
        <dbReference type="UniProtKB" id="O14744"/>
    </source>
</evidence>
<evidence type="ECO:0000255" key="3">
    <source>
        <dbReference type="PROSITE-ProRule" id="PRU01015"/>
    </source>
</evidence>
<evidence type="ECO:0000269" key="4">
    <source>
    </source>
</evidence>
<evidence type="ECO:0000269" key="5">
    <source>
    </source>
</evidence>
<evidence type="ECO:0000269" key="6">
    <source>
    </source>
</evidence>
<evidence type="ECO:0000269" key="7">
    <source>
    </source>
</evidence>
<evidence type="ECO:0000269" key="8">
    <source>
    </source>
</evidence>
<evidence type="ECO:0000269" key="9">
    <source>
    </source>
</evidence>
<evidence type="ECO:0000269" key="10">
    <source ref="6"/>
</evidence>
<evidence type="ECO:0000305" key="11"/>
<evidence type="ECO:0000312" key="12">
    <source>
        <dbReference type="FlyBase" id="FBgn0015925"/>
    </source>
</evidence>
<evidence type="ECO:0000312" key="13">
    <source>
        <dbReference type="Proteomes" id="UP000000803"/>
    </source>
</evidence>
<protein>
    <recommendedName>
        <fullName evidence="11">Protein arginine N-methyltransferase 5</fullName>
        <ecNumber>2.1.1.-</ecNumber>
    </recommendedName>
    <alternativeName>
        <fullName>JBP1 homolog</fullName>
    </alternativeName>
    <alternativeName>
        <fullName evidence="12">Protein capsuleen</fullName>
    </alternativeName>
</protein>
<dbReference type="EC" id="2.1.1.-"/>
<dbReference type="EMBL" id="AF167574">
    <property type="protein sequence ID" value="AAF04504.1"/>
    <property type="molecule type" value="mRNA"/>
</dbReference>
<dbReference type="EMBL" id="AJ002740">
    <property type="protein sequence ID" value="CAA05712.1"/>
    <property type="molecule type" value="Genomic_DNA"/>
</dbReference>
<dbReference type="EMBL" id="AE013599">
    <property type="protein sequence ID" value="AAF58030.1"/>
    <property type="molecule type" value="Genomic_DNA"/>
</dbReference>
<dbReference type="EMBL" id="AE013599">
    <property type="protein sequence ID" value="AAM68510.1"/>
    <property type="molecule type" value="Genomic_DNA"/>
</dbReference>
<dbReference type="EMBL" id="AY122153">
    <property type="protein sequence ID" value="AAM52665.1"/>
    <property type="molecule type" value="mRNA"/>
</dbReference>
<dbReference type="RefSeq" id="NP_477184.1">
    <molecule id="Q9U6Y9-1"/>
    <property type="nucleotide sequence ID" value="NM_057836.4"/>
</dbReference>
<dbReference type="RefSeq" id="NP_725552.1">
    <molecule id="Q9U6Y9-2"/>
    <property type="nucleotide sequence ID" value="NM_166158.2"/>
</dbReference>
<dbReference type="SMR" id="Q9U6Y9"/>
<dbReference type="BioGRID" id="62528">
    <property type="interactions" value="3"/>
</dbReference>
<dbReference type="FunCoup" id="Q9U6Y9">
    <property type="interactions" value="2247"/>
</dbReference>
<dbReference type="IntAct" id="Q9U6Y9">
    <property type="interactions" value="2"/>
</dbReference>
<dbReference type="STRING" id="7227.FBpp0088810"/>
<dbReference type="PaxDb" id="7227-FBpp0088810"/>
<dbReference type="DNASU" id="36809"/>
<dbReference type="EnsemblMetazoa" id="FBtr0089871">
    <molecule id="Q9U6Y9-1"/>
    <property type="protein sequence ID" value="FBpp0088810"/>
    <property type="gene ID" value="FBgn0015925"/>
</dbReference>
<dbReference type="EnsemblMetazoa" id="FBtr0089872">
    <molecule id="Q9U6Y9-2"/>
    <property type="protein sequence ID" value="FBpp0088811"/>
    <property type="gene ID" value="FBgn0015925"/>
</dbReference>
<dbReference type="GeneID" id="36809"/>
<dbReference type="KEGG" id="dme:Dmel_CG3730"/>
<dbReference type="AGR" id="FB:FBgn0015925"/>
<dbReference type="CTD" id="36809"/>
<dbReference type="FlyBase" id="FBgn0015925">
    <property type="gene designation" value="csul"/>
</dbReference>
<dbReference type="VEuPathDB" id="VectorBase:FBgn0015925"/>
<dbReference type="eggNOG" id="KOG0822">
    <property type="taxonomic scope" value="Eukaryota"/>
</dbReference>
<dbReference type="GeneTree" id="ENSGT00390000001141"/>
<dbReference type="HOGENOM" id="CLU_010247_3_0_1"/>
<dbReference type="InParanoid" id="Q9U6Y9"/>
<dbReference type="OMA" id="KIDNTRC"/>
<dbReference type="OrthoDB" id="1368803at2759"/>
<dbReference type="PhylomeDB" id="Q9U6Y9"/>
<dbReference type="Reactome" id="R-DME-3214858">
    <property type="pathway name" value="RMTs methylate histone arginines"/>
</dbReference>
<dbReference type="BioGRID-ORCS" id="36809">
    <property type="hits" value="0 hits in 1 CRISPR screen"/>
</dbReference>
<dbReference type="GenomeRNAi" id="36809"/>
<dbReference type="PRO" id="PR:Q9U6Y9"/>
<dbReference type="Proteomes" id="UP000000803">
    <property type="component" value="Chromosome 2R"/>
</dbReference>
<dbReference type="Bgee" id="FBgn0015925">
    <property type="expression patterns" value="Expressed in adult Malpighian tubule principal cell of lower segment in Malpighian tubule and 67 other cell types or tissues"/>
</dbReference>
<dbReference type="ExpressionAtlas" id="Q9U6Y9">
    <property type="expression patterns" value="baseline and differential"/>
</dbReference>
<dbReference type="GO" id="GO:0005829">
    <property type="term" value="C:cytosol"/>
    <property type="evidence" value="ECO:0000318"/>
    <property type="project" value="GO_Central"/>
</dbReference>
<dbReference type="GO" id="GO:0005634">
    <property type="term" value="C:nucleus"/>
    <property type="evidence" value="ECO:0000318"/>
    <property type="project" value="GO_Central"/>
</dbReference>
<dbReference type="GO" id="GO:0008469">
    <property type="term" value="F:histone arginine N-methyltransferase activity"/>
    <property type="evidence" value="ECO:0000318"/>
    <property type="project" value="GO_Central"/>
</dbReference>
<dbReference type="GO" id="GO:0008276">
    <property type="term" value="F:protein methyltransferase activity"/>
    <property type="evidence" value="ECO:0000315"/>
    <property type="project" value="FlyBase"/>
</dbReference>
<dbReference type="GO" id="GO:0016274">
    <property type="term" value="F:protein-arginine N-methyltransferase activity"/>
    <property type="evidence" value="ECO:0000315"/>
    <property type="project" value="FlyBase"/>
</dbReference>
<dbReference type="GO" id="GO:0035243">
    <property type="term" value="F:protein-arginine omega-N symmetric methyltransferase activity"/>
    <property type="evidence" value="ECO:0000315"/>
    <property type="project" value="UniProtKB"/>
</dbReference>
<dbReference type="GO" id="GO:0008298">
    <property type="term" value="P:intracellular mRNA localization"/>
    <property type="evidence" value="ECO:0000315"/>
    <property type="project" value="FlyBase"/>
</dbReference>
<dbReference type="GO" id="GO:0030719">
    <property type="term" value="P:P granule organization"/>
    <property type="evidence" value="ECO:0000315"/>
    <property type="project" value="FlyBase"/>
</dbReference>
<dbReference type="GO" id="GO:0018216">
    <property type="term" value="P:peptidyl-arginine methylation"/>
    <property type="evidence" value="ECO:0000315"/>
    <property type="project" value="UniProtKB"/>
</dbReference>
<dbReference type="GO" id="GO:0007315">
    <property type="term" value="P:pole plasm assembly"/>
    <property type="evidence" value="ECO:0000315"/>
    <property type="project" value="FlyBase"/>
</dbReference>
<dbReference type="GO" id="GO:0007318">
    <property type="term" value="P:pole plasm protein localization"/>
    <property type="evidence" value="ECO:0000315"/>
    <property type="project" value="FlyBase"/>
</dbReference>
<dbReference type="GO" id="GO:0006355">
    <property type="term" value="P:regulation of DNA-templated transcription"/>
    <property type="evidence" value="ECO:0000318"/>
    <property type="project" value="GO_Central"/>
</dbReference>
<dbReference type="FunFam" id="3.20.20.150:FF:000038">
    <property type="entry name" value="Protein arginine N-methyltransferase"/>
    <property type="match status" value="1"/>
</dbReference>
<dbReference type="FunFam" id="2.70.160.11:FF:000003">
    <property type="entry name" value="Protein arginine N-methyltransferase 5"/>
    <property type="match status" value="1"/>
</dbReference>
<dbReference type="Gene3D" id="3.20.20.150">
    <property type="entry name" value="Divalent-metal-dependent TIM barrel enzymes"/>
    <property type="match status" value="1"/>
</dbReference>
<dbReference type="Gene3D" id="2.70.160.11">
    <property type="entry name" value="Hnrnp arginine n-methyltransferase1"/>
    <property type="match status" value="1"/>
</dbReference>
<dbReference type="Gene3D" id="3.40.50.150">
    <property type="entry name" value="Vaccinia Virus protein VP39"/>
    <property type="match status" value="1"/>
</dbReference>
<dbReference type="InterPro" id="IPR025799">
    <property type="entry name" value="Arg_MeTrfase"/>
</dbReference>
<dbReference type="InterPro" id="IPR007857">
    <property type="entry name" value="Arg_MeTrfase_PRMT5"/>
</dbReference>
<dbReference type="InterPro" id="IPR035075">
    <property type="entry name" value="PRMT5"/>
</dbReference>
<dbReference type="InterPro" id="IPR035248">
    <property type="entry name" value="PRMT5_C"/>
</dbReference>
<dbReference type="InterPro" id="IPR035247">
    <property type="entry name" value="PRMT5_TIM"/>
</dbReference>
<dbReference type="InterPro" id="IPR029063">
    <property type="entry name" value="SAM-dependent_MTases_sf"/>
</dbReference>
<dbReference type="PANTHER" id="PTHR10738">
    <property type="entry name" value="PROTEIN ARGININE N-METHYLTRANSFERASE 5"/>
    <property type="match status" value="1"/>
</dbReference>
<dbReference type="PANTHER" id="PTHR10738:SF0">
    <property type="entry name" value="PROTEIN ARGININE N-METHYLTRANSFERASE 5"/>
    <property type="match status" value="1"/>
</dbReference>
<dbReference type="Pfam" id="PF05185">
    <property type="entry name" value="PRMT5"/>
    <property type="match status" value="1"/>
</dbReference>
<dbReference type="Pfam" id="PF17286">
    <property type="entry name" value="PRMT5_C"/>
    <property type="match status" value="1"/>
</dbReference>
<dbReference type="Pfam" id="PF17285">
    <property type="entry name" value="PRMT5_TIM"/>
    <property type="match status" value="1"/>
</dbReference>
<dbReference type="PIRSF" id="PIRSF015894">
    <property type="entry name" value="Skb1_MeTrfase"/>
    <property type="match status" value="1"/>
</dbReference>
<dbReference type="SUPFAM" id="SSF53335">
    <property type="entry name" value="S-adenosyl-L-methionine-dependent methyltransferases"/>
    <property type="match status" value="1"/>
</dbReference>
<dbReference type="PROSITE" id="PS51678">
    <property type="entry name" value="SAM_MT_PRMT"/>
    <property type="match status" value="1"/>
</dbReference>